<accession>A1QZK9</accession>
<organism>
    <name type="scientific">Borrelia turicatae (strain 91E135)</name>
    <dbReference type="NCBI Taxonomy" id="314724"/>
    <lineage>
        <taxon>Bacteria</taxon>
        <taxon>Pseudomonadati</taxon>
        <taxon>Spirochaetota</taxon>
        <taxon>Spirochaetia</taxon>
        <taxon>Spirochaetales</taxon>
        <taxon>Borreliaceae</taxon>
        <taxon>Borrelia</taxon>
    </lineage>
</organism>
<evidence type="ECO:0000255" key="1">
    <source>
        <dbReference type="HAMAP-Rule" id="MF_00011"/>
    </source>
</evidence>
<feature type="chain" id="PRO_1000116454" description="Adenylosuccinate synthetase">
    <location>
        <begin position="1"/>
        <end position="427"/>
    </location>
</feature>
<feature type="active site" description="Proton acceptor" evidence="1">
    <location>
        <position position="13"/>
    </location>
</feature>
<feature type="active site" description="Proton donor" evidence="1">
    <location>
        <position position="41"/>
    </location>
</feature>
<feature type="binding site" evidence="1">
    <location>
        <begin position="12"/>
        <end position="18"/>
    </location>
    <ligand>
        <name>GTP</name>
        <dbReference type="ChEBI" id="CHEBI:37565"/>
    </ligand>
</feature>
<feature type="binding site" description="in other chain" evidence="1">
    <location>
        <begin position="13"/>
        <end position="16"/>
    </location>
    <ligand>
        <name>IMP</name>
        <dbReference type="ChEBI" id="CHEBI:58053"/>
        <note>ligand shared between dimeric partners</note>
    </ligand>
</feature>
<feature type="binding site" evidence="1">
    <location>
        <position position="13"/>
    </location>
    <ligand>
        <name>Mg(2+)</name>
        <dbReference type="ChEBI" id="CHEBI:18420"/>
    </ligand>
</feature>
<feature type="binding site" description="in other chain" evidence="1">
    <location>
        <begin position="38"/>
        <end position="41"/>
    </location>
    <ligand>
        <name>IMP</name>
        <dbReference type="ChEBI" id="CHEBI:58053"/>
        <note>ligand shared between dimeric partners</note>
    </ligand>
</feature>
<feature type="binding site" evidence="1">
    <location>
        <begin position="40"/>
        <end position="42"/>
    </location>
    <ligand>
        <name>GTP</name>
        <dbReference type="ChEBI" id="CHEBI:37565"/>
    </ligand>
</feature>
<feature type="binding site" evidence="1">
    <location>
        <position position="40"/>
    </location>
    <ligand>
        <name>Mg(2+)</name>
        <dbReference type="ChEBI" id="CHEBI:18420"/>
    </ligand>
</feature>
<feature type="binding site" description="in other chain" evidence="1">
    <location>
        <position position="126"/>
    </location>
    <ligand>
        <name>IMP</name>
        <dbReference type="ChEBI" id="CHEBI:58053"/>
        <note>ligand shared between dimeric partners</note>
    </ligand>
</feature>
<feature type="binding site" evidence="1">
    <location>
        <position position="140"/>
    </location>
    <ligand>
        <name>IMP</name>
        <dbReference type="ChEBI" id="CHEBI:58053"/>
        <note>ligand shared between dimeric partners</note>
    </ligand>
</feature>
<feature type="binding site" description="in other chain" evidence="1">
    <location>
        <position position="221"/>
    </location>
    <ligand>
        <name>IMP</name>
        <dbReference type="ChEBI" id="CHEBI:58053"/>
        <note>ligand shared between dimeric partners</note>
    </ligand>
</feature>
<feature type="binding site" description="in other chain" evidence="1">
    <location>
        <position position="236"/>
    </location>
    <ligand>
        <name>IMP</name>
        <dbReference type="ChEBI" id="CHEBI:58053"/>
        <note>ligand shared between dimeric partners</note>
    </ligand>
</feature>
<feature type="binding site" evidence="1">
    <location>
        <begin position="295"/>
        <end position="301"/>
    </location>
    <ligand>
        <name>substrate</name>
    </ligand>
</feature>
<feature type="binding site" description="in other chain" evidence="1">
    <location>
        <position position="299"/>
    </location>
    <ligand>
        <name>IMP</name>
        <dbReference type="ChEBI" id="CHEBI:58053"/>
        <note>ligand shared between dimeric partners</note>
    </ligand>
</feature>
<feature type="binding site" evidence="1">
    <location>
        <position position="301"/>
    </location>
    <ligand>
        <name>GTP</name>
        <dbReference type="ChEBI" id="CHEBI:37565"/>
    </ligand>
</feature>
<feature type="binding site" evidence="1">
    <location>
        <begin position="327"/>
        <end position="329"/>
    </location>
    <ligand>
        <name>GTP</name>
        <dbReference type="ChEBI" id="CHEBI:37565"/>
    </ligand>
</feature>
<feature type="binding site" evidence="1">
    <location>
        <begin position="409"/>
        <end position="411"/>
    </location>
    <ligand>
        <name>GTP</name>
        <dbReference type="ChEBI" id="CHEBI:37565"/>
    </ligand>
</feature>
<proteinExistence type="inferred from homology"/>
<name>PURA_BORT9</name>
<sequence>MSIYAVIGTQWGDEGKGKIIDFLSSKIDYVVRFNGGNNAGHTIVVNNKKFIFNLLPSGVLQGAKCILGPGVVIDPLILIKELEALKHNNIKTEIFISDKAHIIMPYHIKLDELNEQKKGVYKIGTTKRGIGPCYADKINRTGIRAVDLLDIKIFERKLKINLDEKNEIIEKIYNHKPFNYDDILSKYKKCIAILQYAITNTEEILNQAINSGKIILIEGAQGTMLDIEHGTFPFVTSSNTLITATTGCGIPISKIKEKIGIVKAFSSRVGSGPFVTEILGPIGDKIREKGQEYGSTTNRPRRIGWLDLLTIKKSISLNELNHLALTKLDILNNIEDLKICTAYEFKGKIYDYIPTSCEILENVKPVYKVFKGFKQNIRNISHYEDLPIEAKEYIEFIEREVGVQISILSLGAEREKTIFRNQKWINI</sequence>
<comment type="function">
    <text evidence="1">Plays an important role in the de novo pathway of purine nucleotide biosynthesis. Catalyzes the first committed step in the biosynthesis of AMP from IMP.</text>
</comment>
<comment type="catalytic activity">
    <reaction evidence="1">
        <text>IMP + L-aspartate + GTP = N(6)-(1,2-dicarboxyethyl)-AMP + GDP + phosphate + 2 H(+)</text>
        <dbReference type="Rhea" id="RHEA:15753"/>
        <dbReference type="ChEBI" id="CHEBI:15378"/>
        <dbReference type="ChEBI" id="CHEBI:29991"/>
        <dbReference type="ChEBI" id="CHEBI:37565"/>
        <dbReference type="ChEBI" id="CHEBI:43474"/>
        <dbReference type="ChEBI" id="CHEBI:57567"/>
        <dbReference type="ChEBI" id="CHEBI:58053"/>
        <dbReference type="ChEBI" id="CHEBI:58189"/>
        <dbReference type="EC" id="6.3.4.4"/>
    </reaction>
</comment>
<comment type="cofactor">
    <cofactor evidence="1">
        <name>Mg(2+)</name>
        <dbReference type="ChEBI" id="CHEBI:18420"/>
    </cofactor>
    <text evidence="1">Binds 1 Mg(2+) ion per subunit.</text>
</comment>
<comment type="pathway">
    <text evidence="1">Purine metabolism; AMP biosynthesis via de novo pathway; AMP from IMP: step 1/2.</text>
</comment>
<comment type="subunit">
    <text evidence="1">Homodimer.</text>
</comment>
<comment type="subcellular location">
    <subcellularLocation>
        <location evidence="1">Cytoplasm</location>
    </subcellularLocation>
</comment>
<comment type="similarity">
    <text evidence="1">Belongs to the adenylosuccinate synthetase family.</text>
</comment>
<protein>
    <recommendedName>
        <fullName evidence="1">Adenylosuccinate synthetase</fullName>
        <shortName evidence="1">AMPSase</shortName>
        <shortName evidence="1">AdSS</shortName>
        <ecNumber evidence="1">6.3.4.4</ecNumber>
    </recommendedName>
    <alternativeName>
        <fullName evidence="1">IMP--aspartate ligase</fullName>
    </alternativeName>
</protein>
<dbReference type="EC" id="6.3.4.4" evidence="1"/>
<dbReference type="EMBL" id="CP000049">
    <property type="protein sequence ID" value="AAX17751.1"/>
    <property type="molecule type" value="Genomic_DNA"/>
</dbReference>
<dbReference type="RefSeq" id="WP_011772370.1">
    <property type="nucleotide sequence ID" value="NC_008710.1"/>
</dbReference>
<dbReference type="SMR" id="A1QZK9"/>
<dbReference type="KEGG" id="btu:BT0421B"/>
<dbReference type="eggNOG" id="COG0104">
    <property type="taxonomic scope" value="Bacteria"/>
</dbReference>
<dbReference type="HOGENOM" id="CLU_029848_0_0_12"/>
<dbReference type="UniPathway" id="UPA00075">
    <property type="reaction ID" value="UER00335"/>
</dbReference>
<dbReference type="Proteomes" id="UP000001205">
    <property type="component" value="Chromosome"/>
</dbReference>
<dbReference type="GO" id="GO:0005737">
    <property type="term" value="C:cytoplasm"/>
    <property type="evidence" value="ECO:0007669"/>
    <property type="project" value="UniProtKB-SubCell"/>
</dbReference>
<dbReference type="GO" id="GO:0004019">
    <property type="term" value="F:adenylosuccinate synthase activity"/>
    <property type="evidence" value="ECO:0007669"/>
    <property type="project" value="UniProtKB-UniRule"/>
</dbReference>
<dbReference type="GO" id="GO:0005525">
    <property type="term" value="F:GTP binding"/>
    <property type="evidence" value="ECO:0007669"/>
    <property type="project" value="UniProtKB-UniRule"/>
</dbReference>
<dbReference type="GO" id="GO:0000287">
    <property type="term" value="F:magnesium ion binding"/>
    <property type="evidence" value="ECO:0007669"/>
    <property type="project" value="UniProtKB-UniRule"/>
</dbReference>
<dbReference type="GO" id="GO:0044208">
    <property type="term" value="P:'de novo' AMP biosynthetic process"/>
    <property type="evidence" value="ECO:0007669"/>
    <property type="project" value="UniProtKB-UniRule"/>
</dbReference>
<dbReference type="GO" id="GO:0046040">
    <property type="term" value="P:IMP metabolic process"/>
    <property type="evidence" value="ECO:0007669"/>
    <property type="project" value="TreeGrafter"/>
</dbReference>
<dbReference type="CDD" id="cd03108">
    <property type="entry name" value="AdSS"/>
    <property type="match status" value="1"/>
</dbReference>
<dbReference type="FunFam" id="1.10.300.10:FF:000001">
    <property type="entry name" value="Adenylosuccinate synthetase"/>
    <property type="match status" value="1"/>
</dbReference>
<dbReference type="FunFam" id="3.90.170.10:FF:000001">
    <property type="entry name" value="Adenylosuccinate synthetase"/>
    <property type="match status" value="1"/>
</dbReference>
<dbReference type="Gene3D" id="3.40.440.10">
    <property type="entry name" value="Adenylosuccinate Synthetase, subunit A, domain 1"/>
    <property type="match status" value="1"/>
</dbReference>
<dbReference type="Gene3D" id="1.10.300.10">
    <property type="entry name" value="Adenylosuccinate Synthetase, subunit A, domain 2"/>
    <property type="match status" value="1"/>
</dbReference>
<dbReference type="Gene3D" id="3.90.170.10">
    <property type="entry name" value="Adenylosuccinate Synthetase, subunit A, domain 3"/>
    <property type="match status" value="1"/>
</dbReference>
<dbReference type="HAMAP" id="MF_00011">
    <property type="entry name" value="Adenylosucc_synth"/>
    <property type="match status" value="1"/>
</dbReference>
<dbReference type="InterPro" id="IPR018220">
    <property type="entry name" value="Adenylosuccin_syn_GTP-bd"/>
</dbReference>
<dbReference type="InterPro" id="IPR033128">
    <property type="entry name" value="Adenylosuccin_syn_Lys_AS"/>
</dbReference>
<dbReference type="InterPro" id="IPR042109">
    <property type="entry name" value="Adenylosuccinate_synth_dom1"/>
</dbReference>
<dbReference type="InterPro" id="IPR042110">
    <property type="entry name" value="Adenylosuccinate_synth_dom2"/>
</dbReference>
<dbReference type="InterPro" id="IPR042111">
    <property type="entry name" value="Adenylosuccinate_synth_dom3"/>
</dbReference>
<dbReference type="InterPro" id="IPR001114">
    <property type="entry name" value="Adenylosuccinate_synthetase"/>
</dbReference>
<dbReference type="InterPro" id="IPR027417">
    <property type="entry name" value="P-loop_NTPase"/>
</dbReference>
<dbReference type="NCBIfam" id="NF002223">
    <property type="entry name" value="PRK01117.1"/>
    <property type="match status" value="1"/>
</dbReference>
<dbReference type="NCBIfam" id="TIGR00184">
    <property type="entry name" value="purA"/>
    <property type="match status" value="1"/>
</dbReference>
<dbReference type="PANTHER" id="PTHR11846">
    <property type="entry name" value="ADENYLOSUCCINATE SYNTHETASE"/>
    <property type="match status" value="1"/>
</dbReference>
<dbReference type="PANTHER" id="PTHR11846:SF0">
    <property type="entry name" value="ADENYLOSUCCINATE SYNTHETASE"/>
    <property type="match status" value="1"/>
</dbReference>
<dbReference type="Pfam" id="PF00709">
    <property type="entry name" value="Adenylsucc_synt"/>
    <property type="match status" value="1"/>
</dbReference>
<dbReference type="SMART" id="SM00788">
    <property type="entry name" value="Adenylsucc_synt"/>
    <property type="match status" value="1"/>
</dbReference>
<dbReference type="SUPFAM" id="SSF52540">
    <property type="entry name" value="P-loop containing nucleoside triphosphate hydrolases"/>
    <property type="match status" value="1"/>
</dbReference>
<dbReference type="PROSITE" id="PS01266">
    <property type="entry name" value="ADENYLOSUCCIN_SYN_1"/>
    <property type="match status" value="1"/>
</dbReference>
<dbReference type="PROSITE" id="PS00513">
    <property type="entry name" value="ADENYLOSUCCIN_SYN_2"/>
    <property type="match status" value="1"/>
</dbReference>
<gene>
    <name evidence="1" type="primary">purA</name>
    <name type="ordered locus">BT0421B</name>
</gene>
<keyword id="KW-0963">Cytoplasm</keyword>
<keyword id="KW-0342">GTP-binding</keyword>
<keyword id="KW-0436">Ligase</keyword>
<keyword id="KW-0460">Magnesium</keyword>
<keyword id="KW-0479">Metal-binding</keyword>
<keyword id="KW-0547">Nucleotide-binding</keyword>
<keyword id="KW-0658">Purine biosynthesis</keyword>
<keyword id="KW-1185">Reference proteome</keyword>
<reference key="1">
    <citation type="submission" date="2004-12" db="EMBL/GenBank/DDBJ databases">
        <title>The genome sequence of Borrelia hermsii and Borrelia turicatae: comparative analysis of two agents of endemic N. America relapsing fever.</title>
        <authorList>
            <person name="Porcella S.F."/>
            <person name="Raffel S.J."/>
            <person name="Schrumpf M.E."/>
            <person name="Montgomery B."/>
            <person name="Smith T."/>
            <person name="Schwan T.G."/>
        </authorList>
    </citation>
    <scope>NUCLEOTIDE SEQUENCE [LARGE SCALE GENOMIC DNA]</scope>
    <source>
        <strain>91E135</strain>
    </source>
</reference>